<comment type="function">
    <text>Involved in the development of the inner ear.</text>
</comment>
<comment type="subcellular location">
    <subcellularLocation>
        <location>Nucleus</location>
    </subcellularLocation>
</comment>
<comment type="similarity">
    <text evidence="3">Belongs to the Msh homeobox family.</text>
</comment>
<gene>
    <name type="primary">msxc</name>
    <name type="synonym">msh-c</name>
</gene>
<name>MSXC_DANRE</name>
<evidence type="ECO:0000255" key="1">
    <source>
        <dbReference type="PROSITE-ProRule" id="PRU00108"/>
    </source>
</evidence>
<evidence type="ECO:0000256" key="2">
    <source>
        <dbReference type="SAM" id="MobiDB-lite"/>
    </source>
</evidence>
<evidence type="ECO:0000305" key="3"/>
<dbReference type="EMBL" id="X65061">
    <property type="protein sequence ID" value="CAA46194.1"/>
    <property type="molecule type" value="mRNA"/>
</dbReference>
<dbReference type="EMBL" id="M38580">
    <property type="protein sequence ID" value="AAA50033.1"/>
    <property type="molecule type" value="Genomic_DNA"/>
</dbReference>
<dbReference type="PIR" id="PS0406">
    <property type="entry name" value="PS0406"/>
</dbReference>
<dbReference type="PIR" id="S23281">
    <property type="entry name" value="S23281"/>
</dbReference>
<dbReference type="SMR" id="Q01703"/>
<dbReference type="FunCoup" id="Q01703">
    <property type="interactions" value="18"/>
</dbReference>
<dbReference type="STRING" id="7955.ENSDARP00000024644"/>
<dbReference type="PaxDb" id="7955-ENSDARP00000024644"/>
<dbReference type="AGR" id="ZFIN:ZDB-GENE-980526-306"/>
<dbReference type="ZFIN" id="ZDB-GENE-980526-306">
    <property type="gene designation" value="msx3"/>
</dbReference>
<dbReference type="eggNOG" id="KOG0492">
    <property type="taxonomic scope" value="Eukaryota"/>
</dbReference>
<dbReference type="InParanoid" id="Q01703"/>
<dbReference type="PRO" id="PR:Q01703"/>
<dbReference type="Proteomes" id="UP000000437">
    <property type="component" value="Unplaced"/>
</dbReference>
<dbReference type="GO" id="GO:0005634">
    <property type="term" value="C:nucleus"/>
    <property type="evidence" value="ECO:0000318"/>
    <property type="project" value="GO_Central"/>
</dbReference>
<dbReference type="GO" id="GO:0000981">
    <property type="term" value="F:DNA-binding transcription factor activity, RNA polymerase II-specific"/>
    <property type="evidence" value="ECO:0000318"/>
    <property type="project" value="GO_Central"/>
</dbReference>
<dbReference type="GO" id="GO:0000977">
    <property type="term" value="F:RNA polymerase II transcription regulatory region sequence-specific DNA binding"/>
    <property type="evidence" value="ECO:0000318"/>
    <property type="project" value="GO_Central"/>
</dbReference>
<dbReference type="GO" id="GO:0048598">
    <property type="term" value="P:embryonic morphogenesis"/>
    <property type="evidence" value="ECO:0000318"/>
    <property type="project" value="GO_Central"/>
</dbReference>
<dbReference type="GO" id="GO:0043049">
    <property type="term" value="P:otic placode formation"/>
    <property type="evidence" value="ECO:0000316"/>
    <property type="project" value="ZFIN"/>
</dbReference>
<dbReference type="GO" id="GO:0006357">
    <property type="term" value="P:regulation of transcription by RNA polymerase II"/>
    <property type="evidence" value="ECO:0000318"/>
    <property type="project" value="GO_Central"/>
</dbReference>
<dbReference type="CDD" id="cd00086">
    <property type="entry name" value="homeodomain"/>
    <property type="match status" value="1"/>
</dbReference>
<dbReference type="FunFam" id="1.10.10.60:FF:000134">
    <property type="entry name" value="Homeobox protein MSX-1"/>
    <property type="match status" value="1"/>
</dbReference>
<dbReference type="Gene3D" id="1.10.10.60">
    <property type="entry name" value="Homeodomain-like"/>
    <property type="match status" value="1"/>
</dbReference>
<dbReference type="InterPro" id="IPR001356">
    <property type="entry name" value="HD"/>
</dbReference>
<dbReference type="InterPro" id="IPR020479">
    <property type="entry name" value="HD_metazoa"/>
</dbReference>
<dbReference type="InterPro" id="IPR017970">
    <property type="entry name" value="Homeobox_CS"/>
</dbReference>
<dbReference type="InterPro" id="IPR009057">
    <property type="entry name" value="Homeodomain-like_sf"/>
</dbReference>
<dbReference type="InterPro" id="IPR050674">
    <property type="entry name" value="Msh_Homeobox_Regulators"/>
</dbReference>
<dbReference type="PANTHER" id="PTHR24338">
    <property type="entry name" value="HOMEOBOX PROTEIN MSX"/>
    <property type="match status" value="1"/>
</dbReference>
<dbReference type="PANTHER" id="PTHR24338:SF9">
    <property type="entry name" value="HOMEOBOX PROTEIN MSX-3"/>
    <property type="match status" value="1"/>
</dbReference>
<dbReference type="Pfam" id="PF00046">
    <property type="entry name" value="Homeodomain"/>
    <property type="match status" value="1"/>
</dbReference>
<dbReference type="PRINTS" id="PR00024">
    <property type="entry name" value="HOMEOBOX"/>
</dbReference>
<dbReference type="SMART" id="SM00389">
    <property type="entry name" value="HOX"/>
    <property type="match status" value="1"/>
</dbReference>
<dbReference type="SUPFAM" id="SSF46689">
    <property type="entry name" value="Homeodomain-like"/>
    <property type="match status" value="1"/>
</dbReference>
<dbReference type="PROSITE" id="PS00027">
    <property type="entry name" value="HOMEOBOX_1"/>
    <property type="match status" value="1"/>
</dbReference>
<dbReference type="PROSITE" id="PS50071">
    <property type="entry name" value="HOMEOBOX_2"/>
    <property type="match status" value="1"/>
</dbReference>
<organism>
    <name type="scientific">Danio rerio</name>
    <name type="common">Zebrafish</name>
    <name type="synonym">Brachydanio rerio</name>
    <dbReference type="NCBI Taxonomy" id="7955"/>
    <lineage>
        <taxon>Eukaryota</taxon>
        <taxon>Metazoa</taxon>
        <taxon>Chordata</taxon>
        <taxon>Craniata</taxon>
        <taxon>Vertebrata</taxon>
        <taxon>Euteleostomi</taxon>
        <taxon>Actinopterygii</taxon>
        <taxon>Neopterygii</taxon>
        <taxon>Teleostei</taxon>
        <taxon>Ostariophysi</taxon>
        <taxon>Cypriniformes</taxon>
        <taxon>Danionidae</taxon>
        <taxon>Danioninae</taxon>
        <taxon>Danio</taxon>
    </lineage>
</organism>
<sequence length="273" mass="30186">MAPLSSMMNSLQGPLSQEGKLQERKSDKEDAQSNDKAAVKGCKGKALSLPFSVESLISDRTSSRTLYTSSEAGIISPTSGADERLKLSPMALYADRKIPVESVSNLSDCKRGDMEELSDKGQSGWFQTTSYTSPPRHSSPPPCTLRKHKNNRKPRTPFTTSQLLALERKFRQKQYLSIAERAEFSNSLNLTETQVKIWFQNRRAKAKRLQEAELEKLKLATKPLLPAFAFPFPLGTHVGSPPLYGPSSSFPRPALPVPGLFGGPVTYGMYYLS</sequence>
<proteinExistence type="evidence at transcript level"/>
<accession>Q01703</accession>
<feature type="chain" id="PRO_0000049068" description="Homeobox protein MSH-C">
    <location>
        <begin position="1"/>
        <end position="273"/>
    </location>
</feature>
<feature type="DNA-binding region" description="Homeobox" evidence="1">
    <location>
        <begin position="151"/>
        <end position="210"/>
    </location>
</feature>
<feature type="region of interest" description="Disordered" evidence="2">
    <location>
        <begin position="1"/>
        <end position="41"/>
    </location>
</feature>
<feature type="region of interest" description="Disordered" evidence="2">
    <location>
        <begin position="114"/>
        <end position="159"/>
    </location>
</feature>
<feature type="compositionally biased region" description="Polar residues" evidence="2">
    <location>
        <begin position="1"/>
        <end position="15"/>
    </location>
</feature>
<feature type="compositionally biased region" description="Basic and acidic residues" evidence="2">
    <location>
        <begin position="20"/>
        <end position="33"/>
    </location>
</feature>
<feature type="compositionally biased region" description="Polar residues" evidence="2">
    <location>
        <begin position="120"/>
        <end position="136"/>
    </location>
</feature>
<feature type="compositionally biased region" description="Basic residues" evidence="2">
    <location>
        <begin position="145"/>
        <end position="155"/>
    </location>
</feature>
<reference key="1">
    <citation type="journal article" date="1992" name="Neuron">
        <title>Regional expression of three homeobox transcripts in the inner ear of zebrafish embryos.</title>
        <authorList>
            <person name="Ekker M."/>
            <person name="Akimenko M.-A."/>
            <person name="Bremiller R."/>
            <person name="Westerfield M."/>
        </authorList>
    </citation>
    <scope>NUCLEOTIDE SEQUENCE [MRNA]</scope>
    <source>
        <tissue>Embryo</tissue>
    </source>
</reference>
<reference key="2">
    <citation type="journal article" date="1991" name="Gene">
        <title>Cloning and evolutionary analysis of msh-like homeobox genes from mouse, zebrafish and ascidian.</title>
        <authorList>
            <person name="Holland P.W.H."/>
        </authorList>
    </citation>
    <scope>NUCLEOTIDE SEQUENCE [GENOMIC DNA] OF 150-210</scope>
</reference>
<protein>
    <recommendedName>
        <fullName>Homeobox protein MSH-C</fullName>
    </recommendedName>
</protein>
<keyword id="KW-0217">Developmental protein</keyword>
<keyword id="KW-0238">DNA-binding</keyword>
<keyword id="KW-0371">Homeobox</keyword>
<keyword id="KW-0539">Nucleus</keyword>
<keyword id="KW-1185">Reference proteome</keyword>